<feature type="chain" id="PRO_0000285022" description="Ribosomal RNA small subunit methyltransferase F">
    <location>
        <begin position="1"/>
        <end position="473"/>
    </location>
</feature>
<feature type="active site" description="Nucleophile" evidence="1">
    <location>
        <position position="245"/>
    </location>
</feature>
<feature type="binding site" evidence="1">
    <location>
        <begin position="123"/>
        <end position="129"/>
    </location>
    <ligand>
        <name>S-adenosyl-L-methionine</name>
        <dbReference type="ChEBI" id="CHEBI:59789"/>
    </ligand>
</feature>
<feature type="binding site" evidence="1">
    <location>
        <position position="147"/>
    </location>
    <ligand>
        <name>S-adenosyl-L-methionine</name>
        <dbReference type="ChEBI" id="CHEBI:59789"/>
    </ligand>
</feature>
<feature type="binding site" evidence="1">
    <location>
        <position position="174"/>
    </location>
    <ligand>
        <name>S-adenosyl-L-methionine</name>
        <dbReference type="ChEBI" id="CHEBI:59789"/>
    </ligand>
</feature>
<feature type="binding site" evidence="1">
    <location>
        <position position="192"/>
    </location>
    <ligand>
        <name>S-adenosyl-L-methionine</name>
        <dbReference type="ChEBI" id="CHEBI:59789"/>
    </ligand>
</feature>
<protein>
    <recommendedName>
        <fullName evidence="1">Ribosomal RNA small subunit methyltransferase F</fullName>
        <ecNumber evidence="1">2.1.1.178</ecNumber>
    </recommendedName>
    <alternativeName>
        <fullName evidence="1">16S rRNA m5C1407 methyltransferase</fullName>
    </alternativeName>
    <alternativeName>
        <fullName evidence="1">rRNA (cytosine-C(5)-)-methyltransferase RsmF</fullName>
    </alternativeName>
</protein>
<gene>
    <name evidence="1" type="primary">rsmF</name>
    <name type="ordered locus">VC_1502</name>
</gene>
<comment type="function">
    <text evidence="1">Specifically methylates the cytosine at position 1407 (m5C1407) of 16S rRNA.</text>
</comment>
<comment type="catalytic activity">
    <reaction evidence="1">
        <text>cytidine(1407) in 16S rRNA + S-adenosyl-L-methionine = 5-methylcytidine(1407) in 16S rRNA + S-adenosyl-L-homocysteine + H(+)</text>
        <dbReference type="Rhea" id="RHEA:42756"/>
        <dbReference type="Rhea" id="RHEA-COMP:10223"/>
        <dbReference type="Rhea" id="RHEA-COMP:10224"/>
        <dbReference type="ChEBI" id="CHEBI:15378"/>
        <dbReference type="ChEBI" id="CHEBI:57856"/>
        <dbReference type="ChEBI" id="CHEBI:59789"/>
        <dbReference type="ChEBI" id="CHEBI:74483"/>
        <dbReference type="ChEBI" id="CHEBI:82748"/>
        <dbReference type="EC" id="2.1.1.178"/>
    </reaction>
</comment>
<comment type="subcellular location">
    <subcellularLocation>
        <location evidence="1">Cytoplasm</location>
    </subcellularLocation>
</comment>
<comment type="similarity">
    <text evidence="1">Belongs to the class I-like SAM-binding methyltransferase superfamily. RsmB/NOP family.</text>
</comment>
<comment type="sequence caution" evidence="2">
    <conflict type="erroneous initiation">
        <sequence resource="EMBL-CDS" id="AAF94657"/>
    </conflict>
</comment>
<keyword id="KW-0963">Cytoplasm</keyword>
<keyword id="KW-0489">Methyltransferase</keyword>
<keyword id="KW-1185">Reference proteome</keyword>
<keyword id="KW-0694">RNA-binding</keyword>
<keyword id="KW-0698">rRNA processing</keyword>
<keyword id="KW-0949">S-adenosyl-L-methionine</keyword>
<keyword id="KW-0808">Transferase</keyword>
<name>RSMF_VIBCH</name>
<accession>Q9KRY1</accession>
<reference key="1">
    <citation type="journal article" date="2000" name="Nature">
        <title>DNA sequence of both chromosomes of the cholera pathogen Vibrio cholerae.</title>
        <authorList>
            <person name="Heidelberg J.F."/>
            <person name="Eisen J.A."/>
            <person name="Nelson W.C."/>
            <person name="Clayton R.A."/>
            <person name="Gwinn M.L."/>
            <person name="Dodson R.J."/>
            <person name="Haft D.H."/>
            <person name="Hickey E.K."/>
            <person name="Peterson J.D."/>
            <person name="Umayam L.A."/>
            <person name="Gill S.R."/>
            <person name="Nelson K.E."/>
            <person name="Read T.D."/>
            <person name="Tettelin H."/>
            <person name="Richardson D.L."/>
            <person name="Ermolaeva M.D."/>
            <person name="Vamathevan J.J."/>
            <person name="Bass S."/>
            <person name="Qin H."/>
            <person name="Dragoi I."/>
            <person name="Sellers P."/>
            <person name="McDonald L.A."/>
            <person name="Utterback T.R."/>
            <person name="Fleischmann R.D."/>
            <person name="Nierman W.C."/>
            <person name="White O."/>
            <person name="Salzberg S.L."/>
            <person name="Smith H.O."/>
            <person name="Colwell R.R."/>
            <person name="Mekalanos J.J."/>
            <person name="Venter J.C."/>
            <person name="Fraser C.M."/>
        </authorList>
    </citation>
    <scope>NUCLEOTIDE SEQUENCE [LARGE SCALE GENOMIC DNA]</scope>
    <source>
        <strain>ATCC 39315 / El Tor Inaba N16961</strain>
    </source>
</reference>
<organism>
    <name type="scientific">Vibrio cholerae serotype O1 (strain ATCC 39315 / El Tor Inaba N16961)</name>
    <dbReference type="NCBI Taxonomy" id="243277"/>
    <lineage>
        <taxon>Bacteria</taxon>
        <taxon>Pseudomonadati</taxon>
        <taxon>Pseudomonadota</taxon>
        <taxon>Gammaproteobacteria</taxon>
        <taxon>Vibrionales</taxon>
        <taxon>Vibrionaceae</taxon>
        <taxon>Vibrio</taxon>
    </lineage>
</organism>
<sequence>MHPNISLPEPFIASMAKILPDPTQLADFIAACQRPLRKSIRVNTLKISVAEFCQRAAEKEWQLTPVPWCENGFWIDADESLVPLGNTAEHMAGLFYIQEASSMMPVSALFMGNAHYDSVLDMAAAPGSKTTQMAALMDNQGVLVANEFSASRVKVLHANIERCGIRNTALSNFDGCVFGGWLPERFDAVLIDAPCSGEGTIRKDPDAMKNWSLESIQSIANTQKALIESAFQALKVGGTLVYSTCTLSREENQQVCWHLKQTYGDAVSFESLGNLFEHASLALTEEGFLHIFPQMYDCEGFFVAKIRKLASVPTPEVNKRLGKFPFNKASHKQQAEIAQQLHKSLGIELPSDAQVWLRDNDVWLFPEALEPLLGELRFSRMGIKIAEAHKSGYRWQHQVATCLASSSASHSVELDTTQAREWFMGRDVRPEGQSGQGEVIIRYANDVIGLGKWVGNRVKNGLPRELVRDKNLF</sequence>
<proteinExistence type="inferred from homology"/>
<evidence type="ECO:0000255" key="1">
    <source>
        <dbReference type="HAMAP-Rule" id="MF_01579"/>
    </source>
</evidence>
<evidence type="ECO:0000305" key="2"/>
<dbReference type="EC" id="2.1.1.178" evidence="1"/>
<dbReference type="EMBL" id="AE003852">
    <property type="protein sequence ID" value="AAF94657.1"/>
    <property type="status" value="ALT_INIT"/>
    <property type="molecule type" value="Genomic_DNA"/>
</dbReference>
<dbReference type="PIR" id="A82193">
    <property type="entry name" value="A82193"/>
</dbReference>
<dbReference type="RefSeq" id="NP_231143.1">
    <property type="nucleotide sequence ID" value="NC_002505.1"/>
</dbReference>
<dbReference type="RefSeq" id="WP_000553486.1">
    <property type="nucleotide sequence ID" value="NZ_LT906614.1"/>
</dbReference>
<dbReference type="SMR" id="Q9KRY1"/>
<dbReference type="STRING" id="243277.VC_1502"/>
<dbReference type="DNASU" id="2614008"/>
<dbReference type="EnsemblBacteria" id="AAF94657">
    <property type="protein sequence ID" value="AAF94657"/>
    <property type="gene ID" value="VC_1502"/>
</dbReference>
<dbReference type="KEGG" id="vch:VC_1502"/>
<dbReference type="PATRIC" id="fig|243277.26.peg.1429"/>
<dbReference type="eggNOG" id="COG0144">
    <property type="taxonomic scope" value="Bacteria"/>
</dbReference>
<dbReference type="eggNOG" id="COG3270">
    <property type="taxonomic scope" value="Bacteria"/>
</dbReference>
<dbReference type="HOGENOM" id="CLU_005316_6_2_6"/>
<dbReference type="Proteomes" id="UP000000584">
    <property type="component" value="Chromosome 1"/>
</dbReference>
<dbReference type="GO" id="GO:0005737">
    <property type="term" value="C:cytoplasm"/>
    <property type="evidence" value="ECO:0007669"/>
    <property type="project" value="UniProtKB-SubCell"/>
</dbReference>
<dbReference type="GO" id="GO:0003723">
    <property type="term" value="F:RNA binding"/>
    <property type="evidence" value="ECO:0007669"/>
    <property type="project" value="UniProtKB-KW"/>
</dbReference>
<dbReference type="GO" id="GO:0009383">
    <property type="term" value="F:rRNA (cytosine-C5-)-methyltransferase activity"/>
    <property type="evidence" value="ECO:0000318"/>
    <property type="project" value="GO_Central"/>
</dbReference>
<dbReference type="GO" id="GO:0070475">
    <property type="term" value="P:rRNA base methylation"/>
    <property type="evidence" value="ECO:0000318"/>
    <property type="project" value="GO_Central"/>
</dbReference>
<dbReference type="FunFam" id="3.40.50.150:FF:000079">
    <property type="entry name" value="Ribosomal RNA small subunit methyltransferase F"/>
    <property type="match status" value="1"/>
</dbReference>
<dbReference type="Gene3D" id="3.10.450.720">
    <property type="match status" value="1"/>
</dbReference>
<dbReference type="Gene3D" id="3.40.50.150">
    <property type="entry name" value="Vaccinia Virus protein VP39"/>
    <property type="match status" value="1"/>
</dbReference>
<dbReference type="HAMAP" id="MF_01579">
    <property type="entry name" value="16SrRNA_methyltr_F"/>
    <property type="match status" value="1"/>
</dbReference>
<dbReference type="InterPro" id="IPR031341">
    <property type="entry name" value="Methyltr_RsmF_N"/>
</dbReference>
<dbReference type="InterPro" id="IPR049560">
    <property type="entry name" value="MeTrfase_RsmB-F_NOP2_cat"/>
</dbReference>
<dbReference type="InterPro" id="IPR001678">
    <property type="entry name" value="MeTrfase_RsmB-F_NOP2_dom"/>
</dbReference>
<dbReference type="InterPro" id="IPR027391">
    <property type="entry name" value="Nol1_Nop2_Fmu_2"/>
</dbReference>
<dbReference type="InterPro" id="IPR011023">
    <property type="entry name" value="Nop2p"/>
</dbReference>
<dbReference type="InterPro" id="IPR023267">
    <property type="entry name" value="RCMT"/>
</dbReference>
<dbReference type="InterPro" id="IPR023545">
    <property type="entry name" value="rRNA_ssu_MeTfrase_F"/>
</dbReference>
<dbReference type="InterPro" id="IPR018314">
    <property type="entry name" value="RsmB/NOL1/NOP2-like_CS"/>
</dbReference>
<dbReference type="InterPro" id="IPR029063">
    <property type="entry name" value="SAM-dependent_MTases_sf"/>
</dbReference>
<dbReference type="InterPro" id="IPR048457">
    <property type="entry name" value="YebU_pre-PUA_dom"/>
</dbReference>
<dbReference type="NCBIfam" id="TIGR00446">
    <property type="entry name" value="nop2p"/>
    <property type="match status" value="1"/>
</dbReference>
<dbReference type="NCBIfam" id="NF008898">
    <property type="entry name" value="PRK11933.1"/>
    <property type="match status" value="1"/>
</dbReference>
<dbReference type="PANTHER" id="PTHR22807:SF30">
    <property type="entry name" value="28S RRNA (CYTOSINE(4447)-C(5))-METHYLTRANSFERASE-RELATED"/>
    <property type="match status" value="1"/>
</dbReference>
<dbReference type="PANTHER" id="PTHR22807">
    <property type="entry name" value="NOP2 YEAST -RELATED NOL1/NOP2/FMU SUN DOMAIN-CONTAINING"/>
    <property type="match status" value="1"/>
</dbReference>
<dbReference type="Pfam" id="PF01189">
    <property type="entry name" value="Methyltr_RsmB-F"/>
    <property type="match status" value="1"/>
</dbReference>
<dbReference type="Pfam" id="PF17125">
    <property type="entry name" value="Methyltr_RsmF_N"/>
    <property type="match status" value="1"/>
</dbReference>
<dbReference type="Pfam" id="PF13636">
    <property type="entry name" value="Methyltranf_PUA"/>
    <property type="match status" value="1"/>
</dbReference>
<dbReference type="Pfam" id="PF21150">
    <property type="entry name" value="YebU_pre-PUA_dom"/>
    <property type="match status" value="1"/>
</dbReference>
<dbReference type="PRINTS" id="PR02008">
    <property type="entry name" value="RCMTFAMILY"/>
</dbReference>
<dbReference type="SUPFAM" id="SSF53335">
    <property type="entry name" value="S-adenosyl-L-methionine-dependent methyltransferases"/>
    <property type="match status" value="1"/>
</dbReference>
<dbReference type="PROSITE" id="PS01153">
    <property type="entry name" value="NOL1_NOP2_SUN"/>
    <property type="match status" value="1"/>
</dbReference>
<dbReference type="PROSITE" id="PS51686">
    <property type="entry name" value="SAM_MT_RSMB_NOP"/>
    <property type="match status" value="1"/>
</dbReference>